<feature type="chain" id="PRO_1000008365" description="Translation initiation factor IF-2">
    <location>
        <begin position="1"/>
        <end position="1104"/>
    </location>
</feature>
<feature type="domain" description="tr-type G">
    <location>
        <begin position="596"/>
        <end position="768"/>
    </location>
</feature>
<feature type="region of interest" description="Disordered" evidence="3">
    <location>
        <begin position="51"/>
        <end position="444"/>
    </location>
</feature>
<feature type="region of interest" description="Disordered" evidence="3">
    <location>
        <begin position="461"/>
        <end position="497"/>
    </location>
</feature>
<feature type="region of interest" description="G1" evidence="1">
    <location>
        <begin position="605"/>
        <end position="612"/>
    </location>
</feature>
<feature type="region of interest" description="G2" evidence="1">
    <location>
        <begin position="630"/>
        <end position="634"/>
    </location>
</feature>
<feature type="region of interest" description="G3" evidence="1">
    <location>
        <begin position="655"/>
        <end position="658"/>
    </location>
</feature>
<feature type="region of interest" description="G4" evidence="1">
    <location>
        <begin position="709"/>
        <end position="712"/>
    </location>
</feature>
<feature type="region of interest" description="G5" evidence="1">
    <location>
        <begin position="745"/>
        <end position="747"/>
    </location>
</feature>
<feature type="compositionally biased region" description="Low complexity" evidence="3">
    <location>
        <begin position="60"/>
        <end position="119"/>
    </location>
</feature>
<feature type="compositionally biased region" description="Low complexity" evidence="3">
    <location>
        <begin position="127"/>
        <end position="164"/>
    </location>
</feature>
<feature type="compositionally biased region" description="Pro residues" evidence="3">
    <location>
        <begin position="189"/>
        <end position="202"/>
    </location>
</feature>
<feature type="compositionally biased region" description="Low complexity" evidence="3">
    <location>
        <begin position="203"/>
        <end position="215"/>
    </location>
</feature>
<feature type="compositionally biased region" description="Low complexity" evidence="3">
    <location>
        <begin position="227"/>
        <end position="246"/>
    </location>
</feature>
<feature type="compositionally biased region" description="Low complexity" evidence="3">
    <location>
        <begin position="311"/>
        <end position="336"/>
    </location>
</feature>
<feature type="compositionally biased region" description="Low complexity" evidence="3">
    <location>
        <begin position="366"/>
        <end position="396"/>
    </location>
</feature>
<feature type="compositionally biased region" description="Basic and acidic residues" evidence="3">
    <location>
        <begin position="406"/>
        <end position="420"/>
    </location>
</feature>
<feature type="compositionally biased region" description="Basic residues" evidence="3">
    <location>
        <begin position="481"/>
        <end position="495"/>
    </location>
</feature>
<feature type="binding site" evidence="2">
    <location>
        <begin position="605"/>
        <end position="612"/>
    </location>
    <ligand>
        <name>GTP</name>
        <dbReference type="ChEBI" id="CHEBI:37565"/>
    </ligand>
</feature>
<feature type="binding site" evidence="2">
    <location>
        <begin position="655"/>
        <end position="659"/>
    </location>
    <ligand>
        <name>GTP</name>
        <dbReference type="ChEBI" id="CHEBI:37565"/>
    </ligand>
</feature>
<feature type="binding site" evidence="2">
    <location>
        <begin position="709"/>
        <end position="712"/>
    </location>
    <ligand>
        <name>GTP</name>
        <dbReference type="ChEBI" id="CHEBI:37565"/>
    </ligand>
</feature>
<proteinExistence type="inferred from homology"/>
<dbReference type="EMBL" id="CP000110">
    <property type="protein sequence ID" value="ABB35821.1"/>
    <property type="molecule type" value="Genomic_DNA"/>
</dbReference>
<dbReference type="RefSeq" id="WP_011365030.1">
    <property type="nucleotide sequence ID" value="NC_007516.1"/>
</dbReference>
<dbReference type="SMR" id="Q3AHW1"/>
<dbReference type="STRING" id="110662.Syncc9605_2081"/>
<dbReference type="KEGG" id="syd:Syncc9605_2081"/>
<dbReference type="eggNOG" id="COG0532">
    <property type="taxonomic scope" value="Bacteria"/>
</dbReference>
<dbReference type="HOGENOM" id="CLU_006301_5_1_3"/>
<dbReference type="OrthoDB" id="9811804at2"/>
<dbReference type="GO" id="GO:0005829">
    <property type="term" value="C:cytosol"/>
    <property type="evidence" value="ECO:0007669"/>
    <property type="project" value="TreeGrafter"/>
</dbReference>
<dbReference type="GO" id="GO:0005525">
    <property type="term" value="F:GTP binding"/>
    <property type="evidence" value="ECO:0007669"/>
    <property type="project" value="UniProtKB-KW"/>
</dbReference>
<dbReference type="GO" id="GO:0003924">
    <property type="term" value="F:GTPase activity"/>
    <property type="evidence" value="ECO:0007669"/>
    <property type="project" value="UniProtKB-UniRule"/>
</dbReference>
<dbReference type="GO" id="GO:0003743">
    <property type="term" value="F:translation initiation factor activity"/>
    <property type="evidence" value="ECO:0007669"/>
    <property type="project" value="UniProtKB-UniRule"/>
</dbReference>
<dbReference type="CDD" id="cd01887">
    <property type="entry name" value="IF2_eIF5B"/>
    <property type="match status" value="1"/>
</dbReference>
<dbReference type="CDD" id="cd03702">
    <property type="entry name" value="IF2_mtIF2_II"/>
    <property type="match status" value="1"/>
</dbReference>
<dbReference type="CDD" id="cd03692">
    <property type="entry name" value="mtIF2_IVc"/>
    <property type="match status" value="1"/>
</dbReference>
<dbReference type="FunFam" id="2.40.30.10:FF:000007">
    <property type="entry name" value="Translation initiation factor IF-2"/>
    <property type="match status" value="1"/>
</dbReference>
<dbReference type="FunFam" id="2.40.30.10:FF:000008">
    <property type="entry name" value="Translation initiation factor IF-2"/>
    <property type="match status" value="1"/>
</dbReference>
<dbReference type="FunFam" id="3.40.50.10050:FF:000001">
    <property type="entry name" value="Translation initiation factor IF-2"/>
    <property type="match status" value="1"/>
</dbReference>
<dbReference type="FunFam" id="3.40.50.300:FF:000019">
    <property type="entry name" value="Translation initiation factor IF-2"/>
    <property type="match status" value="1"/>
</dbReference>
<dbReference type="Gene3D" id="1.10.10.2480">
    <property type="match status" value="1"/>
</dbReference>
<dbReference type="Gene3D" id="3.40.50.300">
    <property type="entry name" value="P-loop containing nucleotide triphosphate hydrolases"/>
    <property type="match status" value="1"/>
</dbReference>
<dbReference type="Gene3D" id="2.40.30.10">
    <property type="entry name" value="Translation factors"/>
    <property type="match status" value="2"/>
</dbReference>
<dbReference type="Gene3D" id="3.40.50.10050">
    <property type="entry name" value="Translation initiation factor IF- 2, domain 3"/>
    <property type="match status" value="1"/>
</dbReference>
<dbReference type="HAMAP" id="MF_00100_B">
    <property type="entry name" value="IF_2_B"/>
    <property type="match status" value="1"/>
</dbReference>
<dbReference type="InterPro" id="IPR053905">
    <property type="entry name" value="EF-G-like_DII"/>
</dbReference>
<dbReference type="InterPro" id="IPR044145">
    <property type="entry name" value="IF2_II"/>
</dbReference>
<dbReference type="InterPro" id="IPR006847">
    <property type="entry name" value="IF2_N"/>
</dbReference>
<dbReference type="InterPro" id="IPR027417">
    <property type="entry name" value="P-loop_NTPase"/>
</dbReference>
<dbReference type="InterPro" id="IPR005225">
    <property type="entry name" value="Small_GTP-bd"/>
</dbReference>
<dbReference type="InterPro" id="IPR000795">
    <property type="entry name" value="T_Tr_GTP-bd_dom"/>
</dbReference>
<dbReference type="InterPro" id="IPR000178">
    <property type="entry name" value="TF_IF2_bacterial-like"/>
</dbReference>
<dbReference type="InterPro" id="IPR015760">
    <property type="entry name" value="TIF_IF2"/>
</dbReference>
<dbReference type="InterPro" id="IPR023115">
    <property type="entry name" value="TIF_IF2_dom3"/>
</dbReference>
<dbReference type="InterPro" id="IPR036925">
    <property type="entry name" value="TIF_IF2_dom3_sf"/>
</dbReference>
<dbReference type="InterPro" id="IPR009000">
    <property type="entry name" value="Transl_B-barrel_sf"/>
</dbReference>
<dbReference type="NCBIfam" id="TIGR00487">
    <property type="entry name" value="IF-2"/>
    <property type="match status" value="1"/>
</dbReference>
<dbReference type="NCBIfam" id="TIGR00231">
    <property type="entry name" value="small_GTP"/>
    <property type="match status" value="1"/>
</dbReference>
<dbReference type="PANTHER" id="PTHR43381:SF5">
    <property type="entry name" value="TR-TYPE G DOMAIN-CONTAINING PROTEIN"/>
    <property type="match status" value="1"/>
</dbReference>
<dbReference type="PANTHER" id="PTHR43381">
    <property type="entry name" value="TRANSLATION INITIATION FACTOR IF-2-RELATED"/>
    <property type="match status" value="1"/>
</dbReference>
<dbReference type="Pfam" id="PF22042">
    <property type="entry name" value="EF-G_D2"/>
    <property type="match status" value="1"/>
</dbReference>
<dbReference type="Pfam" id="PF00009">
    <property type="entry name" value="GTP_EFTU"/>
    <property type="match status" value="1"/>
</dbReference>
<dbReference type="Pfam" id="PF11987">
    <property type="entry name" value="IF-2"/>
    <property type="match status" value="1"/>
</dbReference>
<dbReference type="Pfam" id="PF04760">
    <property type="entry name" value="IF2_N"/>
    <property type="match status" value="2"/>
</dbReference>
<dbReference type="PRINTS" id="PR00315">
    <property type="entry name" value="ELONGATNFCT"/>
</dbReference>
<dbReference type="SMART" id="SM00173">
    <property type="entry name" value="RAS"/>
    <property type="match status" value="1"/>
</dbReference>
<dbReference type="SUPFAM" id="SSF52156">
    <property type="entry name" value="Initiation factor IF2/eIF5b, domain 3"/>
    <property type="match status" value="1"/>
</dbReference>
<dbReference type="SUPFAM" id="SSF52540">
    <property type="entry name" value="P-loop containing nucleoside triphosphate hydrolases"/>
    <property type="match status" value="1"/>
</dbReference>
<dbReference type="SUPFAM" id="SSF50447">
    <property type="entry name" value="Translation proteins"/>
    <property type="match status" value="2"/>
</dbReference>
<dbReference type="PROSITE" id="PS51722">
    <property type="entry name" value="G_TR_2"/>
    <property type="match status" value="1"/>
</dbReference>
<dbReference type="PROSITE" id="PS01176">
    <property type="entry name" value="IF2"/>
    <property type="match status" value="1"/>
</dbReference>
<keyword id="KW-0963">Cytoplasm</keyword>
<keyword id="KW-0342">GTP-binding</keyword>
<keyword id="KW-0396">Initiation factor</keyword>
<keyword id="KW-0547">Nucleotide-binding</keyword>
<keyword id="KW-0648">Protein biosynthesis</keyword>
<evidence type="ECO:0000250" key="1"/>
<evidence type="ECO:0000255" key="2">
    <source>
        <dbReference type="HAMAP-Rule" id="MF_00100"/>
    </source>
</evidence>
<evidence type="ECO:0000256" key="3">
    <source>
        <dbReference type="SAM" id="MobiDB-lite"/>
    </source>
</evidence>
<comment type="function">
    <text evidence="2">One of the essential components for the initiation of protein synthesis. Protects formylmethionyl-tRNA from spontaneous hydrolysis and promotes its binding to the 30S ribosomal subunits. Also involved in the hydrolysis of GTP during the formation of the 70S ribosomal complex.</text>
</comment>
<comment type="subcellular location">
    <subcellularLocation>
        <location evidence="2">Cytoplasm</location>
    </subcellularLocation>
</comment>
<comment type="similarity">
    <text evidence="2">Belongs to the TRAFAC class translation factor GTPase superfamily. Classic translation factor GTPase family. IF-2 subfamily.</text>
</comment>
<name>IF2_SYNSC</name>
<gene>
    <name evidence="2" type="primary">infB</name>
    <name type="ordered locus">Syncc9605_2081</name>
</gene>
<protein>
    <recommendedName>
        <fullName evidence="2">Translation initiation factor IF-2</fullName>
    </recommendedName>
</protein>
<organism>
    <name type="scientific">Synechococcus sp. (strain CC9605)</name>
    <dbReference type="NCBI Taxonomy" id="110662"/>
    <lineage>
        <taxon>Bacteria</taxon>
        <taxon>Bacillati</taxon>
        <taxon>Cyanobacteriota</taxon>
        <taxon>Cyanophyceae</taxon>
        <taxon>Synechococcales</taxon>
        <taxon>Synechococcaceae</taxon>
        <taxon>Synechococcus</taxon>
    </lineage>
</organism>
<reference key="1">
    <citation type="submission" date="2005-07" db="EMBL/GenBank/DDBJ databases">
        <title>Complete sequence of Synechococcus sp. CC9605.</title>
        <authorList>
            <consortium name="US DOE Joint Genome Institute"/>
            <person name="Copeland A."/>
            <person name="Lucas S."/>
            <person name="Lapidus A."/>
            <person name="Barry K."/>
            <person name="Detter J.C."/>
            <person name="Glavina T."/>
            <person name="Hammon N."/>
            <person name="Israni S."/>
            <person name="Pitluck S."/>
            <person name="Schmutz J."/>
            <person name="Martinez M."/>
            <person name="Larimer F."/>
            <person name="Land M."/>
            <person name="Kyrpides N."/>
            <person name="Ivanova N."/>
            <person name="Richardson P."/>
        </authorList>
    </citation>
    <scope>NUCLEOTIDE SEQUENCE [LARGE SCALE GENOMIC DNA]</scope>
    <source>
        <strain>CC9605</strain>
    </source>
</reference>
<accession>Q3AHW1</accession>
<sequence length="1104" mass="116171">MTSSGKVRIYELSKDLGLENKDVLDAAEKLSIAAKSHSSSISDAEAGKIRSLLGKGGNGAKPAAAAPAKPAPGKAILSVKKAAPATPSKPTPAVSKPVAKPVAAKPVVTKPAAAVKPQAAPKPPAAATPKPVISKPAPALVKAAAAPARPTAAKPVPRPAAAKPQVVSKPAAGKPKLVSKPKATAKPTAPTPRPTPARPTPRPAGAGSPARPTPGQGQPKPQIIRSGAPSRPGAPTRAGAPAKPGAPSRPTPRPELVGKPVPRRPAGTGVPQRQGGPSRPGAPTRQGRPGMPPRSGNTLELVGKPIRRDGSTTGSGRPGAPTRPGAPGRPGMPAGMRKPVAPGELMQLQKPVGRPAAPAPRRPDAPTKAGAGAGTATPPVARPNSPSAPRRPSFRPGGPGGQRRPGRPDWDDSARLDALRSRSPQKQRQKVHIIGENDDSLAAQTGGFAGEQENMVLSASLARPAKPKSQQRTAPKPVAAMRKRKKETARQRQRRRAMELRAAREAKQVRPEMIVVPEDNLTVQELADMLSVESSEIIKSLFFKGIIATVTQTLDMPTIEAVADEFGVPVLQDDVEEAAKKTVEMIEEADKAHLIRRPPVVTVMGHVDHGKTSLLDAIRQARVAAGEAGGITQHIGAYQVEIEHNNEQRKLTFLDTPGHEAFTAMRARGTKVTDVAVLVVAADDGVRPQTLEAISHARAAEVPIVVAINKIDKEGSSPERVKQELSEQNLLAEDWGGDVVMVPVSAIKGENIDKLLEMLLLVTEVEDLQANPDRLARGTVIEAHLDKAKGPVATLLVQNGTLKTGDVLAAGPVLGKVRAMVDDNRQRLKQAGPSFAVEALGFSEVPTAGDEFEVYPDEKSARAVVGDRASDARATRLAQQMASRRVSLTAMSGQANDGELKELNLILKADVQGSVEAILGSLEQLPKDEVQVRVLLSAPGEITETDVDLAAASGAVIVGFNTSMASGAKKAADATGVDVRDYDVIYKLLEDIQMAMEGLLEPELVEEALGEAEVRAVFTIGKSAVAGCYVTTGKLHRNCRVRVHRGKQVVYEGDLDSLRRNKDDVKEVATGFECGVGTDRFANWEEGDRIEAFKMVTQRRKLTT</sequence>